<keyword id="KW-0157">Chromophore</keyword>
<keyword id="KW-0227">DNA damage</keyword>
<keyword id="KW-0234">DNA repair</keyword>
<keyword id="KW-0238">DNA-binding</keyword>
<keyword id="KW-0274">FAD</keyword>
<keyword id="KW-0285">Flavoprotein</keyword>
<keyword id="KW-0456">Lyase</keyword>
<keyword id="KW-0547">Nucleotide-binding</keyword>
<keyword id="KW-1185">Reference proteome</keyword>
<organism>
    <name type="scientific">Salmonella typhimurium (strain LT2 / SGSC1412 / ATCC 700720)</name>
    <dbReference type="NCBI Taxonomy" id="99287"/>
    <lineage>
        <taxon>Bacteria</taxon>
        <taxon>Pseudomonadati</taxon>
        <taxon>Pseudomonadota</taxon>
        <taxon>Gammaproteobacteria</taxon>
        <taxon>Enterobacterales</taxon>
        <taxon>Enterobacteriaceae</taxon>
        <taxon>Salmonella</taxon>
    </lineage>
</organism>
<accession>P25078</accession>
<feature type="chain" id="PRO_0000085110" description="Deoxyribodipyrimidine photo-lyase">
    <location>
        <begin position="1"/>
        <end position="473"/>
    </location>
</feature>
<feature type="domain" description="Photolyase/cryptochrome alpha/beta">
    <location>
        <begin position="2"/>
        <end position="134"/>
    </location>
</feature>
<feature type="region of interest" description="Interaction with DNA" evidence="1">
    <location>
        <begin position="276"/>
        <end position="283"/>
    </location>
</feature>
<feature type="region of interest" description="Interaction with DNA" evidence="1">
    <location>
        <begin position="343"/>
        <end position="344"/>
    </location>
</feature>
<feature type="binding site" evidence="2">
    <location>
        <position position="109"/>
    </location>
    <ligand>
        <name>(6R)-5,10-methylene-5,6,7,8-tetrahydrofolate</name>
        <dbReference type="ChEBI" id="CHEBI:15636"/>
    </ligand>
</feature>
<feature type="binding site" evidence="2">
    <location>
        <position position="110"/>
    </location>
    <ligand>
        <name>(6R)-5,10-methylene-5,6,7,8-tetrahydrofolate</name>
        <dbReference type="ChEBI" id="CHEBI:15636"/>
    </ligand>
</feature>
<feature type="binding site" evidence="1">
    <location>
        <position position="224"/>
    </location>
    <ligand>
        <name>FAD</name>
        <dbReference type="ChEBI" id="CHEBI:57692"/>
    </ligand>
</feature>
<feature type="binding site" evidence="1">
    <location>
        <position position="228"/>
    </location>
    <ligand>
        <name>DNA</name>
        <dbReference type="ChEBI" id="CHEBI:16991"/>
    </ligand>
</feature>
<feature type="binding site" evidence="1">
    <location>
        <begin position="236"/>
        <end position="240"/>
    </location>
    <ligand>
        <name>FAD</name>
        <dbReference type="ChEBI" id="CHEBI:57692"/>
    </ligand>
</feature>
<feature type="binding site" evidence="1">
    <location>
        <begin position="374"/>
        <end position="376"/>
    </location>
    <ligand>
        <name>FAD</name>
        <dbReference type="ChEBI" id="CHEBI:57692"/>
    </ligand>
</feature>
<feature type="binding site" evidence="1">
    <location>
        <position position="406"/>
    </location>
    <ligand>
        <name>DNA</name>
        <dbReference type="ChEBI" id="CHEBI:16991"/>
    </ligand>
</feature>
<feature type="site" description="Electron transfer via tryptophanyl radical" evidence="1">
    <location>
        <position position="308"/>
    </location>
</feature>
<feature type="site" description="Electron transfer via tryptophanyl radical" evidence="1">
    <location>
        <position position="361"/>
    </location>
</feature>
<feature type="site" description="Electron transfer via tryptophanyl radical" evidence="1">
    <location>
        <position position="384"/>
    </location>
</feature>
<feature type="sequence conflict" description="In Ref. 1; CAA43069." evidence="3" ref="1">
    <original>A</original>
    <variation>R</variation>
    <location>
        <position position="115"/>
    </location>
</feature>
<feature type="sequence conflict" description="In Ref. 1; CAA43069." evidence="3" ref="1">
    <original>A</original>
    <variation>E</variation>
    <location>
        <position position="196"/>
    </location>
</feature>
<protein>
    <recommendedName>
        <fullName>Deoxyribodipyrimidine photo-lyase</fullName>
        <ecNumber>4.1.99.3</ecNumber>
    </recommendedName>
    <alternativeName>
        <fullName>DNA photolyase</fullName>
    </alternativeName>
    <alternativeName>
        <fullName>Photoreactivating enzyme</fullName>
    </alternativeName>
</protein>
<dbReference type="EC" id="4.1.99.3"/>
<dbReference type="EMBL" id="X60662">
    <property type="protein sequence ID" value="CAA43069.1"/>
    <property type="status" value="ALT_SEQ"/>
    <property type="molecule type" value="Genomic_DNA"/>
</dbReference>
<dbReference type="EMBL" id="AE006468">
    <property type="protein sequence ID" value="AAL19653.1"/>
    <property type="molecule type" value="Genomic_DNA"/>
</dbReference>
<dbReference type="PIR" id="S22321">
    <property type="entry name" value="S22321"/>
</dbReference>
<dbReference type="RefSeq" id="NP_459694.1">
    <property type="nucleotide sequence ID" value="NC_003197.2"/>
</dbReference>
<dbReference type="RefSeq" id="WP_001142016.1">
    <property type="nucleotide sequence ID" value="NC_003197.2"/>
</dbReference>
<dbReference type="SMR" id="P25078"/>
<dbReference type="STRING" id="99287.STM0709"/>
<dbReference type="PaxDb" id="99287-STM0709"/>
<dbReference type="GeneID" id="1252229"/>
<dbReference type="KEGG" id="stm:STM0709"/>
<dbReference type="PATRIC" id="fig|99287.12.peg.741"/>
<dbReference type="HOGENOM" id="CLU_010348_2_2_6"/>
<dbReference type="OMA" id="YTVFTPY"/>
<dbReference type="PhylomeDB" id="P25078"/>
<dbReference type="BioCyc" id="SENT99287:STM0709-MONOMER"/>
<dbReference type="Proteomes" id="UP000001014">
    <property type="component" value="Chromosome"/>
</dbReference>
<dbReference type="GO" id="GO:0003904">
    <property type="term" value="F:deoxyribodipyrimidine photo-lyase activity"/>
    <property type="evidence" value="ECO:0000318"/>
    <property type="project" value="GO_Central"/>
</dbReference>
<dbReference type="GO" id="GO:0003677">
    <property type="term" value="F:DNA binding"/>
    <property type="evidence" value="ECO:0000318"/>
    <property type="project" value="GO_Central"/>
</dbReference>
<dbReference type="GO" id="GO:0071949">
    <property type="term" value="F:FAD binding"/>
    <property type="evidence" value="ECO:0000318"/>
    <property type="project" value="GO_Central"/>
</dbReference>
<dbReference type="GO" id="GO:0006281">
    <property type="term" value="P:DNA repair"/>
    <property type="evidence" value="ECO:0007669"/>
    <property type="project" value="UniProtKB-KW"/>
</dbReference>
<dbReference type="GO" id="GO:0009416">
    <property type="term" value="P:response to light stimulus"/>
    <property type="evidence" value="ECO:0000318"/>
    <property type="project" value="GO_Central"/>
</dbReference>
<dbReference type="FunFam" id="1.10.579.10:FF:000003">
    <property type="entry name" value="Deoxyribodipyrimidine photo-lyase"/>
    <property type="match status" value="1"/>
</dbReference>
<dbReference type="Gene3D" id="1.25.40.80">
    <property type="match status" value="1"/>
</dbReference>
<dbReference type="Gene3D" id="1.10.579.10">
    <property type="entry name" value="DNA Cyclobutane Dipyrimidine Photolyase, subunit A, domain 3"/>
    <property type="match status" value="1"/>
</dbReference>
<dbReference type="Gene3D" id="3.40.50.620">
    <property type="entry name" value="HUPs"/>
    <property type="match status" value="1"/>
</dbReference>
<dbReference type="InterPro" id="IPR036134">
    <property type="entry name" value="Crypto/Photolyase_FAD-like_sf"/>
</dbReference>
<dbReference type="InterPro" id="IPR036155">
    <property type="entry name" value="Crypto/Photolyase_N_sf"/>
</dbReference>
<dbReference type="InterPro" id="IPR005101">
    <property type="entry name" value="Cryptochr/Photolyase_FAD-bd"/>
</dbReference>
<dbReference type="InterPro" id="IPR002081">
    <property type="entry name" value="Cryptochrome/DNA_photolyase_1"/>
</dbReference>
<dbReference type="InterPro" id="IPR018394">
    <property type="entry name" value="DNA_photolyase_1_CS_C"/>
</dbReference>
<dbReference type="InterPro" id="IPR006050">
    <property type="entry name" value="DNA_photolyase_N"/>
</dbReference>
<dbReference type="InterPro" id="IPR014729">
    <property type="entry name" value="Rossmann-like_a/b/a_fold"/>
</dbReference>
<dbReference type="NCBIfam" id="NF007955">
    <property type="entry name" value="PRK10674.1"/>
    <property type="match status" value="1"/>
</dbReference>
<dbReference type="PANTHER" id="PTHR11455">
    <property type="entry name" value="CRYPTOCHROME"/>
    <property type="match status" value="1"/>
</dbReference>
<dbReference type="PANTHER" id="PTHR11455:SF9">
    <property type="entry name" value="CRYPTOCHROME CIRCADIAN CLOCK 5 ISOFORM X1"/>
    <property type="match status" value="1"/>
</dbReference>
<dbReference type="Pfam" id="PF00875">
    <property type="entry name" value="DNA_photolyase"/>
    <property type="match status" value="1"/>
</dbReference>
<dbReference type="Pfam" id="PF03441">
    <property type="entry name" value="FAD_binding_7"/>
    <property type="match status" value="1"/>
</dbReference>
<dbReference type="PRINTS" id="PR00147">
    <property type="entry name" value="DNAPHOTLYASE"/>
</dbReference>
<dbReference type="SUPFAM" id="SSF48173">
    <property type="entry name" value="Cryptochrome/photolyase FAD-binding domain"/>
    <property type="match status" value="1"/>
</dbReference>
<dbReference type="SUPFAM" id="SSF52425">
    <property type="entry name" value="Cryptochrome/photolyase, N-terminal domain"/>
    <property type="match status" value="1"/>
</dbReference>
<dbReference type="PROSITE" id="PS00394">
    <property type="entry name" value="DNA_PHOTOLYASES_1_1"/>
    <property type="match status" value="1"/>
</dbReference>
<dbReference type="PROSITE" id="PS00691">
    <property type="entry name" value="DNA_PHOTOLYASES_1_2"/>
    <property type="match status" value="1"/>
</dbReference>
<dbReference type="PROSITE" id="PS51645">
    <property type="entry name" value="PHR_CRY_ALPHA_BETA"/>
    <property type="match status" value="1"/>
</dbReference>
<gene>
    <name type="primary">phrB</name>
    <name type="synonym">phr</name>
    <name type="ordered locus">STM0709</name>
</gene>
<reference key="1">
    <citation type="journal article" date="1991" name="Nucleic Acids Res.">
        <title>Cloning, sequencing, expression and characterization of DNA photolyase from Salmonella typhimurium.</title>
        <authorList>
            <person name="Li Y.F."/>
            <person name="Sancar Z."/>
        </authorList>
    </citation>
    <scope>NUCLEOTIDE SEQUENCE [GENOMIC DNA]</scope>
    <source>
        <strain>LT2</strain>
    </source>
</reference>
<reference key="2">
    <citation type="journal article" date="2001" name="Nature">
        <title>Complete genome sequence of Salmonella enterica serovar Typhimurium LT2.</title>
        <authorList>
            <person name="McClelland M."/>
            <person name="Sanderson K.E."/>
            <person name="Spieth J."/>
            <person name="Clifton S.W."/>
            <person name="Latreille P."/>
            <person name="Courtney L."/>
            <person name="Porwollik S."/>
            <person name="Ali J."/>
            <person name="Dante M."/>
            <person name="Du F."/>
            <person name="Hou S."/>
            <person name="Layman D."/>
            <person name="Leonard S."/>
            <person name="Nguyen C."/>
            <person name="Scott K."/>
            <person name="Holmes A."/>
            <person name="Grewal N."/>
            <person name="Mulvaney E."/>
            <person name="Ryan E."/>
            <person name="Sun H."/>
            <person name="Florea L."/>
            <person name="Miller W."/>
            <person name="Stoneking T."/>
            <person name="Nhan M."/>
            <person name="Waterston R."/>
            <person name="Wilson R.K."/>
        </authorList>
    </citation>
    <scope>NUCLEOTIDE SEQUENCE [LARGE SCALE GENOMIC DNA]</scope>
    <source>
        <strain>LT2 / SGSC1412 / ATCC 700720</strain>
    </source>
</reference>
<reference key="3">
    <citation type="journal article" date="2005" name="Biochim. Biophys. Acta">
        <title>Light-driven enzymatic catalysis of DNA repair: a review of recent biophysical studies on photolyase.</title>
        <authorList>
            <person name="Weber S."/>
        </authorList>
    </citation>
    <scope>REVIEW</scope>
</reference>
<sequence length="473" mass="53675">MPTHLVWFRRDLRLQDNLALAAACRDASARVLALYISTPAQWQAHDMAPRQAAFISAQLNALQTALAEKGIPLLFHEVADFNASIETVKNVCRQHDVSHLFYNYQYEFNERQRDAAVEKTLPSVICEGFDDSVILAPGAVMTGNHEMYKVFTPFKNAWLKRLKEDIPPCVPAPKIRVSGALSTPLTPVSLNYPQQAFDAALFPVEENAVIAQLRQFCAQGADEYALRRDFPAVDGTSRLSASLATGGLSPRQCLHRLLAEQPQALDGGPGSVWLNELIWREFYRHLMTWYPALCKHQPFIRWTKRVAWQENPHYFQAWQKGETGYPIVDAAMRQLNATGWMHNRLRMITASFLVKDLLIDWRLGERYFMSQLIDGDLAANNGGWQWAASTGTDAAPYFRIFNPTTQGERFDRDGEFIRQWLPALRDIPGKAIHEPWRWAEKAGVVLDYPRPIVEHKQARIATLSAYEAARKGA</sequence>
<name>PHR_SALTY</name>
<comment type="function">
    <text>Involved in repair of UV radiation-induced DNA damage. Catalyzes the light-dependent monomerization (300-600 nm) of cyclobutyl pyrimidine dimers (in cis-syn configuration), which are formed between adjacent bases on the same DNA strand upon exposure to ultraviolet radiation.</text>
</comment>
<comment type="catalytic activity">
    <reaction>
        <text>cyclobutadipyrimidine (in DNA) = 2 pyrimidine residues (in DNA).</text>
        <dbReference type="EC" id="4.1.99.3"/>
    </reaction>
</comment>
<comment type="cofactor">
    <cofactor>
        <name>FAD</name>
        <dbReference type="ChEBI" id="CHEBI:57692"/>
    </cofactor>
    <text>Binds 1 FAD per subunit.</text>
</comment>
<comment type="cofactor">
    <cofactor evidence="2">
        <name>(6R)-5,10-methylene-5,6,7,8-tetrahydrofolate</name>
        <dbReference type="ChEBI" id="CHEBI:15636"/>
    </cofactor>
    <text evidence="2">Binds 1 5,10-methenyltetrahydrofolate (MTHF) non-covalently per subunit.</text>
</comment>
<comment type="biophysicochemical properties">
    <absorption>
        <max>384 nm</max>
    </absorption>
</comment>
<comment type="subunit">
    <text>Monomer.</text>
</comment>
<comment type="similarity">
    <text evidence="3">Belongs to the DNA photolyase class-1 family.</text>
</comment>
<comment type="sequence caution" evidence="3">
    <conflict type="miscellaneous discrepancy">
        <sequence resource="EMBL-CDS" id="CAA43069"/>
    </conflict>
    <text>Submitted sequence seems to have every 20th amino acid deleted.</text>
</comment>
<proteinExistence type="evidence at protein level"/>
<evidence type="ECO:0000250" key="1"/>
<evidence type="ECO:0000250" key="2">
    <source>
        <dbReference type="UniProtKB" id="P00914"/>
    </source>
</evidence>
<evidence type="ECO:0000305" key="3"/>